<sequence>MFIKGVILSSYGVNGYARVKSISNNFCDFINLKDNKVLLKKNNGFTIEVKVVDVNIKSNSLYLKFEGINTPESVKSLIGFELWVDDSLASSLKEGEYYLGKLIGYAIVNDNRRLGEVVSFFEYLNSVFLEVKVGIKFFFIPFLSIYIGDIDAREKTIELKVLDLLR</sequence>
<accession>Q660H4</accession>
<protein>
    <recommendedName>
        <fullName evidence="1">Ribosome maturation factor RimM</fullName>
    </recommendedName>
</protein>
<name>RIMM_BORGP</name>
<comment type="function">
    <text evidence="1">An accessory protein needed during the final step in the assembly of 30S ribosomal subunit, possibly for assembly of the head region. Essential for efficient processing of 16S rRNA. May be needed both before and after RbfA during the maturation of 16S rRNA. It has affinity for free ribosomal 30S subunits but not for 70S ribosomes.</text>
</comment>
<comment type="subunit">
    <text evidence="1">Binds ribosomal protein uS19.</text>
</comment>
<comment type="subcellular location">
    <subcellularLocation>
        <location evidence="1">Cytoplasm</location>
    </subcellularLocation>
</comment>
<comment type="domain">
    <text evidence="1">The PRC barrel domain binds ribosomal protein uS19.</text>
</comment>
<comment type="similarity">
    <text evidence="1">Belongs to the RimM family.</text>
</comment>
<gene>
    <name evidence="1" type="primary">rimM</name>
    <name type="ordered locus">BG0720</name>
</gene>
<reference key="1">
    <citation type="journal article" date="2004" name="Nucleic Acids Res.">
        <title>Comparative analysis of the Borrelia garinii genome.</title>
        <authorList>
            <person name="Gloeckner G."/>
            <person name="Lehmann R."/>
            <person name="Romualdi A."/>
            <person name="Pradella S."/>
            <person name="Schulte-Spechtel U."/>
            <person name="Schilhabel M."/>
            <person name="Wilske B."/>
            <person name="Suehnel J."/>
            <person name="Platzer M."/>
        </authorList>
    </citation>
    <scope>NUCLEOTIDE SEQUENCE [LARGE SCALE GENOMIC DNA]</scope>
    <source>
        <strain>ATCC BAA-2496 / DSM 23469 / PBi</strain>
    </source>
</reference>
<keyword id="KW-0143">Chaperone</keyword>
<keyword id="KW-0963">Cytoplasm</keyword>
<keyword id="KW-0690">Ribosome biogenesis</keyword>
<keyword id="KW-0698">rRNA processing</keyword>
<organism>
    <name type="scientific">Borrelia garinii subsp. bavariensis (strain ATCC BAA-2496 / DSM 23469 / PBi)</name>
    <name type="common">Borreliella bavariensis</name>
    <dbReference type="NCBI Taxonomy" id="290434"/>
    <lineage>
        <taxon>Bacteria</taxon>
        <taxon>Pseudomonadati</taxon>
        <taxon>Spirochaetota</taxon>
        <taxon>Spirochaetia</taxon>
        <taxon>Spirochaetales</taxon>
        <taxon>Borreliaceae</taxon>
        <taxon>Borreliella</taxon>
    </lineage>
</organism>
<proteinExistence type="inferred from homology"/>
<dbReference type="EMBL" id="CP000013">
    <property type="protein sequence ID" value="AAU07547.1"/>
    <property type="molecule type" value="Genomic_DNA"/>
</dbReference>
<dbReference type="RefSeq" id="WP_011193999.1">
    <property type="nucleotide sequence ID" value="NZ_CP028872.1"/>
</dbReference>
<dbReference type="SMR" id="Q660H4"/>
<dbReference type="GeneID" id="45161495"/>
<dbReference type="KEGG" id="bga:BG0720"/>
<dbReference type="eggNOG" id="COG0806">
    <property type="taxonomic scope" value="Bacteria"/>
</dbReference>
<dbReference type="HOGENOM" id="CLU_077636_3_2_12"/>
<dbReference type="OrthoDB" id="9810331at2"/>
<dbReference type="Proteomes" id="UP000002276">
    <property type="component" value="Chromosome"/>
</dbReference>
<dbReference type="GO" id="GO:0005737">
    <property type="term" value="C:cytoplasm"/>
    <property type="evidence" value="ECO:0007669"/>
    <property type="project" value="UniProtKB-SubCell"/>
</dbReference>
<dbReference type="GO" id="GO:0005840">
    <property type="term" value="C:ribosome"/>
    <property type="evidence" value="ECO:0007669"/>
    <property type="project" value="InterPro"/>
</dbReference>
<dbReference type="GO" id="GO:0043022">
    <property type="term" value="F:ribosome binding"/>
    <property type="evidence" value="ECO:0007669"/>
    <property type="project" value="InterPro"/>
</dbReference>
<dbReference type="GO" id="GO:0042274">
    <property type="term" value="P:ribosomal small subunit biogenesis"/>
    <property type="evidence" value="ECO:0007669"/>
    <property type="project" value="UniProtKB-UniRule"/>
</dbReference>
<dbReference type="GO" id="GO:0006364">
    <property type="term" value="P:rRNA processing"/>
    <property type="evidence" value="ECO:0007669"/>
    <property type="project" value="UniProtKB-UniRule"/>
</dbReference>
<dbReference type="Gene3D" id="2.30.30.240">
    <property type="entry name" value="PRC-barrel domain"/>
    <property type="match status" value="1"/>
</dbReference>
<dbReference type="Gene3D" id="2.40.30.60">
    <property type="entry name" value="RimM"/>
    <property type="match status" value="1"/>
</dbReference>
<dbReference type="HAMAP" id="MF_00014">
    <property type="entry name" value="Ribosome_mat_RimM"/>
    <property type="match status" value="1"/>
</dbReference>
<dbReference type="InterPro" id="IPR027275">
    <property type="entry name" value="PRC-brl_dom"/>
</dbReference>
<dbReference type="InterPro" id="IPR011033">
    <property type="entry name" value="PRC_barrel-like_sf"/>
</dbReference>
<dbReference type="InterPro" id="IPR011961">
    <property type="entry name" value="RimM"/>
</dbReference>
<dbReference type="InterPro" id="IPR002676">
    <property type="entry name" value="RimM_N"/>
</dbReference>
<dbReference type="InterPro" id="IPR036976">
    <property type="entry name" value="RimM_N_sf"/>
</dbReference>
<dbReference type="InterPro" id="IPR009000">
    <property type="entry name" value="Transl_B-barrel_sf"/>
</dbReference>
<dbReference type="NCBIfam" id="TIGR02273">
    <property type="entry name" value="16S_RimM"/>
    <property type="match status" value="1"/>
</dbReference>
<dbReference type="NCBIfam" id="NF011188">
    <property type="entry name" value="PRK14594.1"/>
    <property type="match status" value="1"/>
</dbReference>
<dbReference type="PANTHER" id="PTHR33692">
    <property type="entry name" value="RIBOSOME MATURATION FACTOR RIMM"/>
    <property type="match status" value="1"/>
</dbReference>
<dbReference type="PANTHER" id="PTHR33692:SF1">
    <property type="entry name" value="RIBOSOME MATURATION FACTOR RIMM"/>
    <property type="match status" value="1"/>
</dbReference>
<dbReference type="Pfam" id="PF05239">
    <property type="entry name" value="PRC"/>
    <property type="match status" value="1"/>
</dbReference>
<dbReference type="Pfam" id="PF01782">
    <property type="entry name" value="RimM"/>
    <property type="match status" value="1"/>
</dbReference>
<dbReference type="SUPFAM" id="SSF50346">
    <property type="entry name" value="PRC-barrel domain"/>
    <property type="match status" value="1"/>
</dbReference>
<dbReference type="SUPFAM" id="SSF50447">
    <property type="entry name" value="Translation proteins"/>
    <property type="match status" value="1"/>
</dbReference>
<feature type="chain" id="PRO_0000163260" description="Ribosome maturation factor RimM">
    <location>
        <begin position="1"/>
        <end position="166"/>
    </location>
</feature>
<feature type="domain" description="PRC barrel" evidence="1">
    <location>
        <begin position="94"/>
        <end position="165"/>
    </location>
</feature>
<evidence type="ECO:0000255" key="1">
    <source>
        <dbReference type="HAMAP-Rule" id="MF_00014"/>
    </source>
</evidence>